<feature type="chain" id="PRO_0000113174" description="Aspartate carbamoyltransferase catalytic subunit">
    <location>
        <begin position="1"/>
        <end position="348"/>
    </location>
</feature>
<feature type="binding site" evidence="1">
    <location>
        <position position="59"/>
    </location>
    <ligand>
        <name>carbamoyl phosphate</name>
        <dbReference type="ChEBI" id="CHEBI:58228"/>
    </ligand>
</feature>
<feature type="binding site" evidence="1">
    <location>
        <position position="60"/>
    </location>
    <ligand>
        <name>carbamoyl phosphate</name>
        <dbReference type="ChEBI" id="CHEBI:58228"/>
    </ligand>
</feature>
<feature type="binding site" evidence="1">
    <location>
        <position position="87"/>
    </location>
    <ligand>
        <name>L-aspartate</name>
        <dbReference type="ChEBI" id="CHEBI:29991"/>
    </ligand>
</feature>
<feature type="binding site" evidence="1">
    <location>
        <position position="109"/>
    </location>
    <ligand>
        <name>carbamoyl phosphate</name>
        <dbReference type="ChEBI" id="CHEBI:58228"/>
    </ligand>
</feature>
<feature type="binding site" evidence="1">
    <location>
        <position position="142"/>
    </location>
    <ligand>
        <name>carbamoyl phosphate</name>
        <dbReference type="ChEBI" id="CHEBI:58228"/>
    </ligand>
</feature>
<feature type="binding site" evidence="1">
    <location>
        <position position="145"/>
    </location>
    <ligand>
        <name>carbamoyl phosphate</name>
        <dbReference type="ChEBI" id="CHEBI:58228"/>
    </ligand>
</feature>
<feature type="binding site" evidence="1">
    <location>
        <position position="182"/>
    </location>
    <ligand>
        <name>L-aspartate</name>
        <dbReference type="ChEBI" id="CHEBI:29991"/>
    </ligand>
</feature>
<feature type="binding site" evidence="1">
    <location>
        <position position="253"/>
    </location>
    <ligand>
        <name>L-aspartate</name>
        <dbReference type="ChEBI" id="CHEBI:29991"/>
    </ligand>
</feature>
<feature type="binding site" evidence="1">
    <location>
        <position position="294"/>
    </location>
    <ligand>
        <name>carbamoyl phosphate</name>
        <dbReference type="ChEBI" id="CHEBI:58228"/>
    </ligand>
</feature>
<feature type="binding site" evidence="1">
    <location>
        <position position="295"/>
    </location>
    <ligand>
        <name>carbamoyl phosphate</name>
        <dbReference type="ChEBI" id="CHEBI:58228"/>
    </ligand>
</feature>
<gene>
    <name evidence="1" type="primary">pyrB</name>
    <name type="ordered locus">PMT_1807</name>
</gene>
<reference key="1">
    <citation type="journal article" date="2003" name="Nature">
        <title>Genome divergence in two Prochlorococcus ecotypes reflects oceanic niche differentiation.</title>
        <authorList>
            <person name="Rocap G."/>
            <person name="Larimer F.W."/>
            <person name="Lamerdin J.E."/>
            <person name="Malfatti S."/>
            <person name="Chain P."/>
            <person name="Ahlgren N.A."/>
            <person name="Arellano A."/>
            <person name="Coleman M."/>
            <person name="Hauser L."/>
            <person name="Hess W.R."/>
            <person name="Johnson Z.I."/>
            <person name="Land M.L."/>
            <person name="Lindell D."/>
            <person name="Post A.F."/>
            <person name="Regala W."/>
            <person name="Shah M."/>
            <person name="Shaw S.L."/>
            <person name="Steglich C."/>
            <person name="Sullivan M.B."/>
            <person name="Ting C.S."/>
            <person name="Tolonen A."/>
            <person name="Webb E.A."/>
            <person name="Zinser E.R."/>
            <person name="Chisholm S.W."/>
        </authorList>
    </citation>
    <scope>NUCLEOTIDE SEQUENCE [LARGE SCALE GENOMIC DNA]</scope>
    <source>
        <strain>MIT 9313</strain>
    </source>
</reference>
<keyword id="KW-0665">Pyrimidine biosynthesis</keyword>
<keyword id="KW-1185">Reference proteome</keyword>
<keyword id="KW-0808">Transferase</keyword>
<comment type="function">
    <text evidence="1">Catalyzes the condensation of carbamoyl phosphate and aspartate to form carbamoyl aspartate and inorganic phosphate, the committed step in the de novo pyrimidine nucleotide biosynthesis pathway.</text>
</comment>
<comment type="catalytic activity">
    <reaction evidence="1">
        <text>carbamoyl phosphate + L-aspartate = N-carbamoyl-L-aspartate + phosphate + H(+)</text>
        <dbReference type="Rhea" id="RHEA:20013"/>
        <dbReference type="ChEBI" id="CHEBI:15378"/>
        <dbReference type="ChEBI" id="CHEBI:29991"/>
        <dbReference type="ChEBI" id="CHEBI:32814"/>
        <dbReference type="ChEBI" id="CHEBI:43474"/>
        <dbReference type="ChEBI" id="CHEBI:58228"/>
        <dbReference type="EC" id="2.1.3.2"/>
    </reaction>
</comment>
<comment type="pathway">
    <text evidence="1">Pyrimidine metabolism; UMP biosynthesis via de novo pathway; (S)-dihydroorotate from bicarbonate: step 2/3.</text>
</comment>
<comment type="subunit">
    <text evidence="1">Heterododecamer (2C3:3R2) of six catalytic PyrB chains organized as two trimers (C3), and six regulatory PyrI chains organized as three dimers (R2).</text>
</comment>
<comment type="similarity">
    <text evidence="1">Belongs to the aspartate/ornithine carbamoyltransferase superfamily. ATCase family.</text>
</comment>
<accession>Q7V4X7</accession>
<name>PYRB_PROMM</name>
<dbReference type="EC" id="2.1.3.2" evidence="1"/>
<dbReference type="EMBL" id="BX548175">
    <property type="protein sequence ID" value="CAE21982.1"/>
    <property type="molecule type" value="Genomic_DNA"/>
</dbReference>
<dbReference type="RefSeq" id="WP_011131174.1">
    <property type="nucleotide sequence ID" value="NC_005071.1"/>
</dbReference>
<dbReference type="SMR" id="Q7V4X7"/>
<dbReference type="KEGG" id="pmt:PMT_1807"/>
<dbReference type="eggNOG" id="COG0540">
    <property type="taxonomic scope" value="Bacteria"/>
</dbReference>
<dbReference type="HOGENOM" id="CLU_043846_2_0_3"/>
<dbReference type="OrthoDB" id="9774690at2"/>
<dbReference type="UniPathway" id="UPA00070">
    <property type="reaction ID" value="UER00116"/>
</dbReference>
<dbReference type="Proteomes" id="UP000001423">
    <property type="component" value="Chromosome"/>
</dbReference>
<dbReference type="GO" id="GO:0005829">
    <property type="term" value="C:cytosol"/>
    <property type="evidence" value="ECO:0007669"/>
    <property type="project" value="TreeGrafter"/>
</dbReference>
<dbReference type="GO" id="GO:0016597">
    <property type="term" value="F:amino acid binding"/>
    <property type="evidence" value="ECO:0007669"/>
    <property type="project" value="InterPro"/>
</dbReference>
<dbReference type="GO" id="GO:0004070">
    <property type="term" value="F:aspartate carbamoyltransferase activity"/>
    <property type="evidence" value="ECO:0007669"/>
    <property type="project" value="UniProtKB-UniRule"/>
</dbReference>
<dbReference type="GO" id="GO:0006207">
    <property type="term" value="P:'de novo' pyrimidine nucleobase biosynthetic process"/>
    <property type="evidence" value="ECO:0007669"/>
    <property type="project" value="InterPro"/>
</dbReference>
<dbReference type="GO" id="GO:0044205">
    <property type="term" value="P:'de novo' UMP biosynthetic process"/>
    <property type="evidence" value="ECO:0007669"/>
    <property type="project" value="UniProtKB-UniRule"/>
</dbReference>
<dbReference type="GO" id="GO:0006520">
    <property type="term" value="P:amino acid metabolic process"/>
    <property type="evidence" value="ECO:0007669"/>
    <property type="project" value="InterPro"/>
</dbReference>
<dbReference type="Gene3D" id="3.40.50.1370">
    <property type="entry name" value="Aspartate/ornithine carbamoyltransferase"/>
    <property type="match status" value="2"/>
</dbReference>
<dbReference type="HAMAP" id="MF_00001">
    <property type="entry name" value="Asp_carb_tr"/>
    <property type="match status" value="1"/>
</dbReference>
<dbReference type="InterPro" id="IPR006132">
    <property type="entry name" value="Asp/Orn_carbamoyltranf_P-bd"/>
</dbReference>
<dbReference type="InterPro" id="IPR006130">
    <property type="entry name" value="Asp/Orn_carbamoylTrfase"/>
</dbReference>
<dbReference type="InterPro" id="IPR036901">
    <property type="entry name" value="Asp/Orn_carbamoylTrfase_sf"/>
</dbReference>
<dbReference type="InterPro" id="IPR002082">
    <property type="entry name" value="Asp_carbamoyltransf"/>
</dbReference>
<dbReference type="InterPro" id="IPR006131">
    <property type="entry name" value="Asp_carbamoyltransf_Asp/Orn-bd"/>
</dbReference>
<dbReference type="NCBIfam" id="TIGR00670">
    <property type="entry name" value="asp_carb_tr"/>
    <property type="match status" value="1"/>
</dbReference>
<dbReference type="NCBIfam" id="NF002032">
    <property type="entry name" value="PRK00856.1"/>
    <property type="match status" value="1"/>
</dbReference>
<dbReference type="PANTHER" id="PTHR45753:SF6">
    <property type="entry name" value="ASPARTATE CARBAMOYLTRANSFERASE"/>
    <property type="match status" value="1"/>
</dbReference>
<dbReference type="PANTHER" id="PTHR45753">
    <property type="entry name" value="ORNITHINE CARBAMOYLTRANSFERASE, MITOCHONDRIAL"/>
    <property type="match status" value="1"/>
</dbReference>
<dbReference type="Pfam" id="PF00185">
    <property type="entry name" value="OTCace"/>
    <property type="match status" value="1"/>
</dbReference>
<dbReference type="Pfam" id="PF02729">
    <property type="entry name" value="OTCace_N"/>
    <property type="match status" value="1"/>
</dbReference>
<dbReference type="PRINTS" id="PR00100">
    <property type="entry name" value="AOTCASE"/>
</dbReference>
<dbReference type="PRINTS" id="PR00101">
    <property type="entry name" value="ATCASE"/>
</dbReference>
<dbReference type="SUPFAM" id="SSF53671">
    <property type="entry name" value="Aspartate/ornithine carbamoyltransferase"/>
    <property type="match status" value="1"/>
</dbReference>
<dbReference type="PROSITE" id="PS00097">
    <property type="entry name" value="CARBAMOYLTRANSFERASE"/>
    <property type="match status" value="1"/>
</dbReference>
<organism>
    <name type="scientific">Prochlorococcus marinus (strain MIT 9313)</name>
    <dbReference type="NCBI Taxonomy" id="74547"/>
    <lineage>
        <taxon>Bacteria</taxon>
        <taxon>Bacillati</taxon>
        <taxon>Cyanobacteriota</taxon>
        <taxon>Cyanophyceae</taxon>
        <taxon>Synechococcales</taxon>
        <taxon>Prochlorococcaceae</taxon>
        <taxon>Prochlorococcus</taxon>
    </lineage>
</organism>
<sequence length="348" mass="37878">MSGWSHRHILDLASFSLEDYSSVLELAHRFRSMPVTGARKLPALQGRLVATLFFEPSTRTRSSFELAARRLSADVQSFTPASSSLSKGETLLDTARTYVAMGADVLVVRHGSTSVPEQLACALDRSGERTAVLNGGDGLHSHPSQGLLDLYTLAHHFDPDHPLPEAIQGRRIVIVGDVLHSRVARSNLWALTACGADVVLCGPPSLVPQDFVAFVEAPPPGQAHDPVLHRGCVEVVRTLEEALPGADAVMTLRLQKERMHQHLLTDLNRFHRDYGLTHERLKLCGKPVPLLHPGPVNRGVELGGSLLDDHSISLVEEQVRNGIPIRMALLYLMAAFESSPDPSLEAIG</sequence>
<protein>
    <recommendedName>
        <fullName evidence="1">Aspartate carbamoyltransferase catalytic subunit</fullName>
        <ecNumber evidence="1">2.1.3.2</ecNumber>
    </recommendedName>
    <alternativeName>
        <fullName evidence="1">Aspartate transcarbamylase</fullName>
        <shortName evidence="1">ATCase</shortName>
    </alternativeName>
</protein>
<evidence type="ECO:0000255" key="1">
    <source>
        <dbReference type="HAMAP-Rule" id="MF_00001"/>
    </source>
</evidence>
<proteinExistence type="inferred from homology"/>